<comment type="function">
    <text evidence="1">Potential tumor suppressor. Acts as a KRAS-specific effector protein. May promote apoptosis and cell cycle arrest. Stabilizes STK3/MST2 by protecting it from proteasomal degradation (By similarity).</text>
</comment>
<comment type="subunit">
    <text evidence="1">Interacts directly with activated KRAS in a GTP-dependent manner. Interacts (via SARAH domain) with STK3/MST2 and STK4/MST1.</text>
</comment>
<comment type="subcellular location">
    <subcellularLocation>
        <location evidence="2">Nucleus</location>
    </subcellularLocation>
    <subcellularLocation>
        <location evidence="2">Cytoplasm</location>
    </subcellularLocation>
    <subcellularLocation>
        <location evidence="2">Chromosome</location>
        <location evidence="2">Centromere</location>
        <location evidence="2">Kinetochore</location>
    </subcellularLocation>
    <text evidence="2">Translocates to the cytoplasm in the presence of STK3/MST2 and STK4/MST1.</text>
</comment>
<comment type="PTM">
    <text evidence="1">Phosphorylated by STK3/MST2 and STK4/MST1.</text>
</comment>
<comment type="sequence caution" evidence="5">
    <conflict type="erroneous initiation">
        <sequence resource="EMBL-CDS" id="BAD32184"/>
    </conflict>
    <text>Extended N-terminus.</text>
</comment>
<accession>Q8BMS9</accession>
<accession>Q6A0B2</accession>
<sequence>MDYTHQPALIPCGQDKYMPKSELLLHLKTYNLYYEGQNLQLRHREEEDEFIVEGLLNISWGLRRPIRLQMQDDHERIRPPPSSSSWHSGCNLGAQGTTLKPLTMPTVQISEVDMPVEGLETHSPTDSRGLKPVQEDTPQLMRTRSDVGVRRRGNVRTSSDQRRIRRHRFSINGHFYNHKTSVFTPAYGSVTNVRINSTMTTPQVLKLLLNKFKIENSAEEFALYVVHTSGEKQRLKSSDYPLIARILQGPCEQISKVFLMEKDQVEEVTYDVAQYIKFEMPVLKSFIQKLQEEEDREVEKLMRKYTVLRLMIRQRLEEIAETPETI</sequence>
<protein>
    <recommendedName>
        <fullName>Ras association domain-containing protein 2</fullName>
    </recommendedName>
</protein>
<dbReference type="EMBL" id="AK172906">
    <property type="protein sequence ID" value="BAD32184.1"/>
    <property type="status" value="ALT_INIT"/>
    <property type="molecule type" value="mRNA"/>
</dbReference>
<dbReference type="EMBL" id="AK028384">
    <property type="protein sequence ID" value="BAC25921.1"/>
    <property type="molecule type" value="mRNA"/>
</dbReference>
<dbReference type="EMBL" id="BC057402">
    <property type="protein sequence ID" value="AAH57402.1"/>
    <property type="molecule type" value="mRNA"/>
</dbReference>
<dbReference type="CCDS" id="CCDS16768.1"/>
<dbReference type="RefSeq" id="NP_001349795.1">
    <property type="nucleotide sequence ID" value="NM_001362866.1"/>
</dbReference>
<dbReference type="RefSeq" id="NP_780654.1">
    <property type="nucleotide sequence ID" value="NM_175445.4"/>
</dbReference>
<dbReference type="RefSeq" id="XP_006499202.1">
    <property type="nucleotide sequence ID" value="XM_006499139.5"/>
</dbReference>
<dbReference type="RefSeq" id="XP_006499203.1">
    <property type="nucleotide sequence ID" value="XM_006499140.4"/>
</dbReference>
<dbReference type="RefSeq" id="XP_006499204.1">
    <property type="nucleotide sequence ID" value="XM_006499141.4"/>
</dbReference>
<dbReference type="RefSeq" id="XP_006499205.1">
    <property type="nucleotide sequence ID" value="XM_006499142.2"/>
</dbReference>
<dbReference type="RefSeq" id="XP_006499206.1">
    <property type="nucleotide sequence ID" value="XM_006499143.3"/>
</dbReference>
<dbReference type="RefSeq" id="XP_006499207.1">
    <property type="nucleotide sequence ID" value="XM_006499144.5"/>
</dbReference>
<dbReference type="SMR" id="Q8BMS9"/>
<dbReference type="BioGRID" id="229644">
    <property type="interactions" value="2"/>
</dbReference>
<dbReference type="FunCoup" id="Q8BMS9">
    <property type="interactions" value="2768"/>
</dbReference>
<dbReference type="STRING" id="10090.ENSMUSP00000028814"/>
<dbReference type="iPTMnet" id="Q8BMS9"/>
<dbReference type="PhosphoSitePlus" id="Q8BMS9"/>
<dbReference type="SwissPalm" id="Q8BMS9"/>
<dbReference type="PaxDb" id="10090-ENSMUSP00000028814"/>
<dbReference type="PeptideAtlas" id="Q8BMS9"/>
<dbReference type="ProteomicsDB" id="255106"/>
<dbReference type="Pumba" id="Q8BMS9"/>
<dbReference type="Antibodypedia" id="42660">
    <property type="antibodies" value="182 antibodies from 33 providers"/>
</dbReference>
<dbReference type="DNASU" id="215653"/>
<dbReference type="Ensembl" id="ENSMUST00000028814.15">
    <property type="protein sequence ID" value="ENSMUSP00000028814.9"/>
    <property type="gene ID" value="ENSMUSG00000027339.16"/>
</dbReference>
<dbReference type="Ensembl" id="ENSMUST00000103182.8">
    <property type="protein sequence ID" value="ENSMUSP00000099471.2"/>
    <property type="gene ID" value="ENSMUSG00000027339.16"/>
</dbReference>
<dbReference type="GeneID" id="215653"/>
<dbReference type="KEGG" id="mmu:215653"/>
<dbReference type="UCSC" id="uc008mmf.2">
    <property type="organism name" value="mouse"/>
</dbReference>
<dbReference type="AGR" id="MGI:2442060"/>
<dbReference type="CTD" id="9770"/>
<dbReference type="MGI" id="MGI:2442060">
    <property type="gene designation" value="Rassf2"/>
</dbReference>
<dbReference type="VEuPathDB" id="HostDB:ENSMUSG00000027339"/>
<dbReference type="eggNOG" id="KOG4239">
    <property type="taxonomic scope" value="Eukaryota"/>
</dbReference>
<dbReference type="GeneTree" id="ENSGT00940000158546"/>
<dbReference type="HOGENOM" id="CLU_018893_1_0_1"/>
<dbReference type="InParanoid" id="Q8BMS9"/>
<dbReference type="OMA" id="DSRPNKW"/>
<dbReference type="OrthoDB" id="9976881at2759"/>
<dbReference type="PhylomeDB" id="Q8BMS9"/>
<dbReference type="TreeFam" id="TF319243"/>
<dbReference type="BioGRID-ORCS" id="215653">
    <property type="hits" value="1 hit in 76 CRISPR screens"/>
</dbReference>
<dbReference type="ChiTaRS" id="Rassf2">
    <property type="organism name" value="mouse"/>
</dbReference>
<dbReference type="PRO" id="PR:Q8BMS9"/>
<dbReference type="Proteomes" id="UP000000589">
    <property type="component" value="Chromosome 2"/>
</dbReference>
<dbReference type="RNAct" id="Q8BMS9">
    <property type="molecule type" value="protein"/>
</dbReference>
<dbReference type="Bgee" id="ENSMUSG00000027339">
    <property type="expression patterns" value="Expressed in meninx and 195 other cell types or tissues"/>
</dbReference>
<dbReference type="ExpressionAtlas" id="Q8BMS9">
    <property type="expression patterns" value="baseline and differential"/>
</dbReference>
<dbReference type="GO" id="GO:0005737">
    <property type="term" value="C:cytoplasm"/>
    <property type="evidence" value="ECO:0000314"/>
    <property type="project" value="MGI"/>
</dbReference>
<dbReference type="GO" id="GO:0005829">
    <property type="term" value="C:cytosol"/>
    <property type="evidence" value="ECO:0007669"/>
    <property type="project" value="Ensembl"/>
</dbReference>
<dbReference type="GO" id="GO:0005794">
    <property type="term" value="C:Golgi apparatus"/>
    <property type="evidence" value="ECO:0007669"/>
    <property type="project" value="Ensembl"/>
</dbReference>
<dbReference type="GO" id="GO:0000776">
    <property type="term" value="C:kinetochore"/>
    <property type="evidence" value="ECO:0000250"/>
    <property type="project" value="UniProtKB"/>
</dbReference>
<dbReference type="GO" id="GO:0005654">
    <property type="term" value="C:nucleoplasm"/>
    <property type="evidence" value="ECO:0007669"/>
    <property type="project" value="Ensembl"/>
</dbReference>
<dbReference type="GO" id="GO:0005634">
    <property type="term" value="C:nucleus"/>
    <property type="evidence" value="ECO:0000314"/>
    <property type="project" value="MGI"/>
</dbReference>
<dbReference type="GO" id="GO:0005886">
    <property type="term" value="C:plasma membrane"/>
    <property type="evidence" value="ECO:0007669"/>
    <property type="project" value="Ensembl"/>
</dbReference>
<dbReference type="GO" id="GO:0032991">
    <property type="term" value="C:protein-containing complex"/>
    <property type="evidence" value="ECO:0000266"/>
    <property type="project" value="MGI"/>
</dbReference>
<dbReference type="GO" id="GO:0004672">
    <property type="term" value="F:protein kinase activity"/>
    <property type="evidence" value="ECO:0000266"/>
    <property type="project" value="MGI"/>
</dbReference>
<dbReference type="GO" id="GO:0046849">
    <property type="term" value="P:bone remodeling"/>
    <property type="evidence" value="ECO:0000315"/>
    <property type="project" value="MGI"/>
</dbReference>
<dbReference type="GO" id="GO:0007249">
    <property type="term" value="P:canonical NF-kappaB signal transduction"/>
    <property type="evidence" value="ECO:0000315"/>
    <property type="project" value="MGI"/>
</dbReference>
<dbReference type="GO" id="GO:0048872">
    <property type="term" value="P:homeostasis of number of cells"/>
    <property type="evidence" value="ECO:0000315"/>
    <property type="project" value="MGI"/>
</dbReference>
<dbReference type="GO" id="GO:1901223">
    <property type="term" value="P:negative regulation of non-canonical NF-kappaB signal transduction"/>
    <property type="evidence" value="ECO:0000315"/>
    <property type="project" value="MGI"/>
</dbReference>
<dbReference type="GO" id="GO:0001503">
    <property type="term" value="P:ossification"/>
    <property type="evidence" value="ECO:0000315"/>
    <property type="project" value="MGI"/>
</dbReference>
<dbReference type="GO" id="GO:0043065">
    <property type="term" value="P:positive regulation of apoptotic process"/>
    <property type="evidence" value="ECO:0000266"/>
    <property type="project" value="MGI"/>
</dbReference>
<dbReference type="GO" id="GO:0046330">
    <property type="term" value="P:positive regulation of JNK cascade"/>
    <property type="evidence" value="ECO:0000266"/>
    <property type="project" value="MGI"/>
</dbReference>
<dbReference type="GO" id="GO:0050821">
    <property type="term" value="P:protein stabilization"/>
    <property type="evidence" value="ECO:0007669"/>
    <property type="project" value="Ensembl"/>
</dbReference>
<dbReference type="GO" id="GO:1901222">
    <property type="term" value="P:regulation of non-canonical NF-kappaB signal transduction"/>
    <property type="evidence" value="ECO:0000315"/>
    <property type="project" value="MGI"/>
</dbReference>
<dbReference type="GO" id="GO:0045667">
    <property type="term" value="P:regulation of osteoblast differentiation"/>
    <property type="evidence" value="ECO:0000315"/>
    <property type="project" value="MGI"/>
</dbReference>
<dbReference type="GO" id="GO:0045670">
    <property type="term" value="P:regulation of osteoclast differentiation"/>
    <property type="evidence" value="ECO:0000315"/>
    <property type="project" value="MGI"/>
</dbReference>
<dbReference type="GO" id="GO:0001501">
    <property type="term" value="P:skeletal system development"/>
    <property type="evidence" value="ECO:0000315"/>
    <property type="project" value="MGI"/>
</dbReference>
<dbReference type="CDD" id="cd17221">
    <property type="entry name" value="RA_RASSF2"/>
    <property type="match status" value="1"/>
</dbReference>
<dbReference type="Gene3D" id="3.10.20.90">
    <property type="entry name" value="Phosphatidylinositol 3-kinase Catalytic Subunit, Chain A, domain 1"/>
    <property type="match status" value="1"/>
</dbReference>
<dbReference type="InterPro" id="IPR000159">
    <property type="entry name" value="RA_dom"/>
</dbReference>
<dbReference type="InterPro" id="IPR033614">
    <property type="entry name" value="RASSF1-6"/>
</dbReference>
<dbReference type="InterPro" id="IPR033618">
    <property type="entry name" value="RASSF2_RA"/>
</dbReference>
<dbReference type="InterPro" id="IPR011524">
    <property type="entry name" value="SARAH_dom"/>
</dbReference>
<dbReference type="InterPro" id="IPR029071">
    <property type="entry name" value="Ubiquitin-like_domsf"/>
</dbReference>
<dbReference type="PANTHER" id="PTHR22738:SF14">
    <property type="entry name" value="RAS ASSOCIATION DOMAIN-CONTAINING PROTEIN 2"/>
    <property type="match status" value="1"/>
</dbReference>
<dbReference type="PANTHER" id="PTHR22738">
    <property type="entry name" value="RASSF"/>
    <property type="match status" value="1"/>
</dbReference>
<dbReference type="Pfam" id="PF16517">
    <property type="entry name" value="Nore1-SARAH"/>
    <property type="match status" value="1"/>
</dbReference>
<dbReference type="Pfam" id="PF00788">
    <property type="entry name" value="RA"/>
    <property type="match status" value="1"/>
</dbReference>
<dbReference type="SMART" id="SM00314">
    <property type="entry name" value="RA"/>
    <property type="match status" value="1"/>
</dbReference>
<dbReference type="SUPFAM" id="SSF54236">
    <property type="entry name" value="Ubiquitin-like"/>
    <property type="match status" value="1"/>
</dbReference>
<dbReference type="PROSITE" id="PS50200">
    <property type="entry name" value="RA"/>
    <property type="match status" value="1"/>
</dbReference>
<dbReference type="PROSITE" id="PS50951">
    <property type="entry name" value="SARAH"/>
    <property type="match status" value="1"/>
</dbReference>
<reference key="1">
    <citation type="journal article" date="2004" name="DNA Res.">
        <title>Prediction of the coding sequences of mouse homologues of KIAA gene: IV. The complete nucleotide sequences of 500 mouse KIAA-homologous cDNAs identified by screening of terminal sequences of cDNA clones randomly sampled from size-fractionated libraries.</title>
        <authorList>
            <person name="Okazaki N."/>
            <person name="Kikuno R."/>
            <person name="Ohara R."/>
            <person name="Inamoto S."/>
            <person name="Koseki H."/>
            <person name="Hiraoka S."/>
            <person name="Saga Y."/>
            <person name="Seino S."/>
            <person name="Nishimura M."/>
            <person name="Kaisho T."/>
            <person name="Hoshino K."/>
            <person name="Kitamura H."/>
            <person name="Nagase T."/>
            <person name="Ohara O."/>
            <person name="Koga H."/>
        </authorList>
    </citation>
    <scope>NUCLEOTIDE SEQUENCE [LARGE SCALE MRNA]</scope>
</reference>
<reference key="2">
    <citation type="journal article" date="2005" name="Science">
        <title>The transcriptional landscape of the mammalian genome.</title>
        <authorList>
            <person name="Carninci P."/>
            <person name="Kasukawa T."/>
            <person name="Katayama S."/>
            <person name="Gough J."/>
            <person name="Frith M.C."/>
            <person name="Maeda N."/>
            <person name="Oyama R."/>
            <person name="Ravasi T."/>
            <person name="Lenhard B."/>
            <person name="Wells C."/>
            <person name="Kodzius R."/>
            <person name="Shimokawa K."/>
            <person name="Bajic V.B."/>
            <person name="Brenner S.E."/>
            <person name="Batalov S."/>
            <person name="Forrest A.R."/>
            <person name="Zavolan M."/>
            <person name="Davis M.J."/>
            <person name="Wilming L.G."/>
            <person name="Aidinis V."/>
            <person name="Allen J.E."/>
            <person name="Ambesi-Impiombato A."/>
            <person name="Apweiler R."/>
            <person name="Aturaliya R.N."/>
            <person name="Bailey T.L."/>
            <person name="Bansal M."/>
            <person name="Baxter L."/>
            <person name="Beisel K.W."/>
            <person name="Bersano T."/>
            <person name="Bono H."/>
            <person name="Chalk A.M."/>
            <person name="Chiu K.P."/>
            <person name="Choudhary V."/>
            <person name="Christoffels A."/>
            <person name="Clutterbuck D.R."/>
            <person name="Crowe M.L."/>
            <person name="Dalla E."/>
            <person name="Dalrymple B.P."/>
            <person name="de Bono B."/>
            <person name="Della Gatta G."/>
            <person name="di Bernardo D."/>
            <person name="Down T."/>
            <person name="Engstrom P."/>
            <person name="Fagiolini M."/>
            <person name="Faulkner G."/>
            <person name="Fletcher C.F."/>
            <person name="Fukushima T."/>
            <person name="Furuno M."/>
            <person name="Futaki S."/>
            <person name="Gariboldi M."/>
            <person name="Georgii-Hemming P."/>
            <person name="Gingeras T.R."/>
            <person name="Gojobori T."/>
            <person name="Green R.E."/>
            <person name="Gustincich S."/>
            <person name="Harbers M."/>
            <person name="Hayashi Y."/>
            <person name="Hensch T.K."/>
            <person name="Hirokawa N."/>
            <person name="Hill D."/>
            <person name="Huminiecki L."/>
            <person name="Iacono M."/>
            <person name="Ikeo K."/>
            <person name="Iwama A."/>
            <person name="Ishikawa T."/>
            <person name="Jakt M."/>
            <person name="Kanapin A."/>
            <person name="Katoh M."/>
            <person name="Kawasawa Y."/>
            <person name="Kelso J."/>
            <person name="Kitamura H."/>
            <person name="Kitano H."/>
            <person name="Kollias G."/>
            <person name="Krishnan S.P."/>
            <person name="Kruger A."/>
            <person name="Kummerfeld S.K."/>
            <person name="Kurochkin I.V."/>
            <person name="Lareau L.F."/>
            <person name="Lazarevic D."/>
            <person name="Lipovich L."/>
            <person name="Liu J."/>
            <person name="Liuni S."/>
            <person name="McWilliam S."/>
            <person name="Madan Babu M."/>
            <person name="Madera M."/>
            <person name="Marchionni L."/>
            <person name="Matsuda H."/>
            <person name="Matsuzawa S."/>
            <person name="Miki H."/>
            <person name="Mignone F."/>
            <person name="Miyake S."/>
            <person name="Morris K."/>
            <person name="Mottagui-Tabar S."/>
            <person name="Mulder N."/>
            <person name="Nakano N."/>
            <person name="Nakauchi H."/>
            <person name="Ng P."/>
            <person name="Nilsson R."/>
            <person name="Nishiguchi S."/>
            <person name="Nishikawa S."/>
            <person name="Nori F."/>
            <person name="Ohara O."/>
            <person name="Okazaki Y."/>
            <person name="Orlando V."/>
            <person name="Pang K.C."/>
            <person name="Pavan W.J."/>
            <person name="Pavesi G."/>
            <person name="Pesole G."/>
            <person name="Petrovsky N."/>
            <person name="Piazza S."/>
            <person name="Reed J."/>
            <person name="Reid J.F."/>
            <person name="Ring B.Z."/>
            <person name="Ringwald M."/>
            <person name="Rost B."/>
            <person name="Ruan Y."/>
            <person name="Salzberg S.L."/>
            <person name="Sandelin A."/>
            <person name="Schneider C."/>
            <person name="Schoenbach C."/>
            <person name="Sekiguchi K."/>
            <person name="Semple C.A."/>
            <person name="Seno S."/>
            <person name="Sessa L."/>
            <person name="Sheng Y."/>
            <person name="Shibata Y."/>
            <person name="Shimada H."/>
            <person name="Shimada K."/>
            <person name="Silva D."/>
            <person name="Sinclair B."/>
            <person name="Sperling S."/>
            <person name="Stupka E."/>
            <person name="Sugiura K."/>
            <person name="Sultana R."/>
            <person name="Takenaka Y."/>
            <person name="Taki K."/>
            <person name="Tammoja K."/>
            <person name="Tan S.L."/>
            <person name="Tang S."/>
            <person name="Taylor M.S."/>
            <person name="Tegner J."/>
            <person name="Teichmann S.A."/>
            <person name="Ueda H.R."/>
            <person name="van Nimwegen E."/>
            <person name="Verardo R."/>
            <person name="Wei C.L."/>
            <person name="Yagi K."/>
            <person name="Yamanishi H."/>
            <person name="Zabarovsky E."/>
            <person name="Zhu S."/>
            <person name="Zimmer A."/>
            <person name="Hide W."/>
            <person name="Bult C."/>
            <person name="Grimmond S.M."/>
            <person name="Teasdale R.D."/>
            <person name="Liu E.T."/>
            <person name="Brusic V."/>
            <person name="Quackenbush J."/>
            <person name="Wahlestedt C."/>
            <person name="Mattick J.S."/>
            <person name="Hume D.A."/>
            <person name="Kai C."/>
            <person name="Sasaki D."/>
            <person name="Tomaru Y."/>
            <person name="Fukuda S."/>
            <person name="Kanamori-Katayama M."/>
            <person name="Suzuki M."/>
            <person name="Aoki J."/>
            <person name="Arakawa T."/>
            <person name="Iida J."/>
            <person name="Imamura K."/>
            <person name="Itoh M."/>
            <person name="Kato T."/>
            <person name="Kawaji H."/>
            <person name="Kawagashira N."/>
            <person name="Kawashima T."/>
            <person name="Kojima M."/>
            <person name="Kondo S."/>
            <person name="Konno H."/>
            <person name="Nakano K."/>
            <person name="Ninomiya N."/>
            <person name="Nishio T."/>
            <person name="Okada M."/>
            <person name="Plessy C."/>
            <person name="Shibata K."/>
            <person name="Shiraki T."/>
            <person name="Suzuki S."/>
            <person name="Tagami M."/>
            <person name="Waki K."/>
            <person name="Watahiki A."/>
            <person name="Okamura-Oho Y."/>
            <person name="Suzuki H."/>
            <person name="Kawai J."/>
            <person name="Hayashizaki Y."/>
        </authorList>
    </citation>
    <scope>NUCLEOTIDE SEQUENCE [LARGE SCALE MRNA]</scope>
    <source>
        <strain>C57BL/6J</strain>
        <tissue>Placenta</tissue>
    </source>
</reference>
<reference key="3">
    <citation type="journal article" date="2004" name="Genome Res.">
        <title>The status, quality, and expansion of the NIH full-length cDNA project: the Mammalian Gene Collection (MGC).</title>
        <authorList>
            <consortium name="The MGC Project Team"/>
        </authorList>
    </citation>
    <scope>NUCLEOTIDE SEQUENCE [LARGE SCALE MRNA]</scope>
    <source>
        <strain>C57BL/6J</strain>
        <tissue>Brain</tissue>
    </source>
</reference>
<reference key="4">
    <citation type="journal article" date="2010" name="Cell">
        <title>A tissue-specific atlas of mouse protein phosphorylation and expression.</title>
        <authorList>
            <person name="Huttlin E.L."/>
            <person name="Jedrychowski M.P."/>
            <person name="Elias J.E."/>
            <person name="Goswami T."/>
            <person name="Rad R."/>
            <person name="Beausoleil S.A."/>
            <person name="Villen J."/>
            <person name="Haas W."/>
            <person name="Sowa M.E."/>
            <person name="Gygi S.P."/>
        </authorList>
    </citation>
    <scope>IDENTIFICATION BY MASS SPECTROMETRY [LARGE SCALE ANALYSIS]</scope>
    <source>
        <tissue>Lung</tissue>
        <tissue>Spleen</tissue>
        <tissue>Testis</tissue>
    </source>
</reference>
<gene>
    <name type="primary">Rassf2</name>
    <name type="synonym">Kiaa0168</name>
</gene>
<organism>
    <name type="scientific">Mus musculus</name>
    <name type="common">Mouse</name>
    <dbReference type="NCBI Taxonomy" id="10090"/>
    <lineage>
        <taxon>Eukaryota</taxon>
        <taxon>Metazoa</taxon>
        <taxon>Chordata</taxon>
        <taxon>Craniata</taxon>
        <taxon>Vertebrata</taxon>
        <taxon>Euteleostomi</taxon>
        <taxon>Mammalia</taxon>
        <taxon>Eutheria</taxon>
        <taxon>Euarchontoglires</taxon>
        <taxon>Glires</taxon>
        <taxon>Rodentia</taxon>
        <taxon>Myomorpha</taxon>
        <taxon>Muroidea</taxon>
        <taxon>Muridae</taxon>
        <taxon>Murinae</taxon>
        <taxon>Mus</taxon>
        <taxon>Mus</taxon>
    </lineage>
</organism>
<keyword id="KW-0131">Cell cycle</keyword>
<keyword id="KW-0137">Centromere</keyword>
<keyword id="KW-0158">Chromosome</keyword>
<keyword id="KW-0963">Cytoplasm</keyword>
<keyword id="KW-0995">Kinetochore</keyword>
<keyword id="KW-0539">Nucleus</keyword>
<keyword id="KW-0597">Phosphoprotein</keyword>
<keyword id="KW-1185">Reference proteome</keyword>
<keyword id="KW-0043">Tumor suppressor</keyword>
<proteinExistence type="evidence at protein level"/>
<evidence type="ECO:0000250" key="1"/>
<evidence type="ECO:0000250" key="2">
    <source>
        <dbReference type="UniProtKB" id="P50749"/>
    </source>
</evidence>
<evidence type="ECO:0000255" key="3">
    <source>
        <dbReference type="PROSITE-ProRule" id="PRU00166"/>
    </source>
</evidence>
<evidence type="ECO:0000255" key="4">
    <source>
        <dbReference type="PROSITE-ProRule" id="PRU00310"/>
    </source>
</evidence>
<evidence type="ECO:0000305" key="5"/>
<feature type="chain" id="PRO_0000233038" description="Ras association domain-containing protein 2">
    <location>
        <begin position="1"/>
        <end position="326"/>
    </location>
</feature>
<feature type="domain" description="Ras-associating" evidence="3">
    <location>
        <begin position="176"/>
        <end position="264"/>
    </location>
</feature>
<feature type="domain" description="SARAH" evidence="4">
    <location>
        <begin position="272"/>
        <end position="319"/>
    </location>
</feature>
<name>RASF2_MOUSE</name>